<evidence type="ECO:0000256" key="1">
    <source>
        <dbReference type="SAM" id="MobiDB-lite"/>
    </source>
</evidence>
<evidence type="ECO:0000269" key="2">
    <source>
    </source>
</evidence>
<evidence type="ECO:0000269" key="3">
    <source>
    </source>
</evidence>
<evidence type="ECO:0000303" key="4">
    <source>
    </source>
</evidence>
<evidence type="ECO:0000305" key="5">
    <source>
    </source>
</evidence>
<keyword id="KW-0479">Metal-binding</keyword>
<keyword id="KW-0539">Nucleus</keyword>
<keyword id="KW-1185">Reference proteome</keyword>
<keyword id="KW-0804">Transcription</keyword>
<keyword id="KW-0805">Transcription regulation</keyword>
<keyword id="KW-0862">Zinc</keyword>
<keyword id="KW-0863">Zinc-finger</keyword>
<organism>
    <name type="scientific">Mycosarcoma maydis</name>
    <name type="common">Corn smut fungus</name>
    <name type="synonym">Ustilago maydis</name>
    <dbReference type="NCBI Taxonomy" id="5270"/>
    <lineage>
        <taxon>Eukaryota</taxon>
        <taxon>Fungi</taxon>
        <taxon>Dikarya</taxon>
        <taxon>Basidiomycota</taxon>
        <taxon>Ustilaginomycotina</taxon>
        <taxon>Ustilaginomycetes</taxon>
        <taxon>Ustilaginales</taxon>
        <taxon>Ustilaginaceae</taxon>
        <taxon>Mycosarcoma</taxon>
    </lineage>
</organism>
<feature type="chain" id="PRO_0000452755" description="Transcription regulator rua1">
    <location>
        <begin position="1"/>
        <end position="757"/>
    </location>
</feature>
<feature type="zinc finger region" description="C2H2-type 1 degenerate" evidence="5">
    <location>
        <begin position="661"/>
        <end position="692"/>
    </location>
</feature>
<feature type="zinc finger region" description="C2H2-type 2; degenerate" evidence="5">
    <location>
        <begin position="717"/>
        <end position="750"/>
    </location>
</feature>
<feature type="region of interest" description="Disordered" evidence="1">
    <location>
        <begin position="122"/>
        <end position="169"/>
    </location>
</feature>
<feature type="region of interest" description="Disordered" evidence="1">
    <location>
        <begin position="181"/>
        <end position="218"/>
    </location>
</feature>
<feature type="region of interest" description="Disordered" evidence="1">
    <location>
        <begin position="237"/>
        <end position="295"/>
    </location>
</feature>
<feature type="region of interest" description="Disordered" evidence="1">
    <location>
        <begin position="372"/>
        <end position="393"/>
    </location>
</feature>
<feature type="region of interest" description="Disordered" evidence="1">
    <location>
        <begin position="422"/>
        <end position="582"/>
    </location>
</feature>
<feature type="compositionally biased region" description="Low complexity" evidence="1">
    <location>
        <begin position="125"/>
        <end position="165"/>
    </location>
</feature>
<feature type="compositionally biased region" description="Polar residues" evidence="1">
    <location>
        <begin position="181"/>
        <end position="190"/>
    </location>
</feature>
<feature type="compositionally biased region" description="Polar residues" evidence="1">
    <location>
        <begin position="200"/>
        <end position="218"/>
    </location>
</feature>
<feature type="compositionally biased region" description="Basic residues" evidence="1">
    <location>
        <begin position="240"/>
        <end position="249"/>
    </location>
</feature>
<feature type="compositionally biased region" description="Polar residues" evidence="1">
    <location>
        <begin position="253"/>
        <end position="277"/>
    </location>
</feature>
<feature type="compositionally biased region" description="Pro residues" evidence="1">
    <location>
        <begin position="379"/>
        <end position="393"/>
    </location>
</feature>
<feature type="compositionally biased region" description="Polar residues" evidence="1">
    <location>
        <begin position="428"/>
        <end position="437"/>
    </location>
</feature>
<feature type="compositionally biased region" description="Basic residues" evidence="1">
    <location>
        <begin position="439"/>
        <end position="453"/>
    </location>
</feature>
<feature type="compositionally biased region" description="Low complexity" evidence="1">
    <location>
        <begin position="454"/>
        <end position="465"/>
    </location>
</feature>
<feature type="compositionally biased region" description="Low complexity" evidence="1">
    <location>
        <begin position="494"/>
        <end position="510"/>
    </location>
</feature>
<feature type="compositionally biased region" description="Low complexity" evidence="1">
    <location>
        <begin position="543"/>
        <end position="582"/>
    </location>
</feature>
<feature type="mutagenesis site" description="Abolishes the nitrogen-dependent transcription of the cluster and impairs the production of ustilagic acid." evidence="3">
    <original>C</original>
    <variation>R</variation>
    <location>
        <position position="748"/>
    </location>
</feature>
<gene>
    <name evidence="4" type="primary">rua1</name>
    <name type="ORF">UMAG_06458</name>
</gene>
<name>RUA1_MYCMD</name>
<comment type="function">
    <text evidence="2 3">Transcription factor; part of the gene cluster that mediates the biosynthesis of the glycolipid biosurfactant ustilagic acid (UA) (PubMed:17850255, PubMed:20173069). UA is a secreted cellobiose glycolipid that is toxic for many microorganisms and confers biocontrol activity to U.maydis (PubMed:17850255). Recognizes and binds to the specific 5'-T/G-G/T-C-G-C-A-T-A/T-C/T-C/T-G/A-3' upstream activating sequence found in all promoters of the UA biosynthesis genes (PubMed:20173069).</text>
</comment>
<comment type="subcellular location">
    <subcellularLocation>
        <location evidence="3">Nucleus</location>
    </subcellularLocation>
</comment>
<comment type="induction">
    <text evidence="2 3">Expression is strongly induced under conditions of nitrogen starvation.</text>
</comment>
<comment type="disruption phenotype">
    <text evidence="3">Results in complete loss of ustilagic acid production.</text>
</comment>
<protein>
    <recommendedName>
        <fullName evidence="4">Transcription regulator rua1</fullName>
    </recommendedName>
    <alternativeName>
        <fullName evidence="4">Regulator of ustilagic acid production 1</fullName>
    </alternativeName>
    <alternativeName>
        <fullName evidence="4">Ustilagic acid biosynthesis cluster protein rua1</fullName>
    </alternativeName>
</protein>
<reference key="1">
    <citation type="journal article" date="2006" name="Nature">
        <title>Insights from the genome of the biotrophic fungal plant pathogen Ustilago maydis.</title>
        <authorList>
            <person name="Kaemper J."/>
            <person name="Kahmann R."/>
            <person name="Boelker M."/>
            <person name="Ma L.-J."/>
            <person name="Brefort T."/>
            <person name="Saville B.J."/>
            <person name="Banuett F."/>
            <person name="Kronstad J.W."/>
            <person name="Gold S.E."/>
            <person name="Mueller O."/>
            <person name="Perlin M.H."/>
            <person name="Woesten H.A.B."/>
            <person name="de Vries R."/>
            <person name="Ruiz-Herrera J."/>
            <person name="Reynaga-Pena C.G."/>
            <person name="Snetselaar K."/>
            <person name="McCann M."/>
            <person name="Perez-Martin J."/>
            <person name="Feldbruegge M."/>
            <person name="Basse C.W."/>
            <person name="Steinberg G."/>
            <person name="Ibeas J.I."/>
            <person name="Holloman W."/>
            <person name="Guzman P."/>
            <person name="Farman M.L."/>
            <person name="Stajich J.E."/>
            <person name="Sentandreu R."/>
            <person name="Gonzalez-Prieto J.M."/>
            <person name="Kennell J.C."/>
            <person name="Molina L."/>
            <person name="Schirawski J."/>
            <person name="Mendoza-Mendoza A."/>
            <person name="Greilinger D."/>
            <person name="Muench K."/>
            <person name="Roessel N."/>
            <person name="Scherer M."/>
            <person name="Vranes M."/>
            <person name="Ladendorf O."/>
            <person name="Vincon V."/>
            <person name="Fuchs U."/>
            <person name="Sandrock B."/>
            <person name="Meng S."/>
            <person name="Ho E.C.H."/>
            <person name="Cahill M.J."/>
            <person name="Boyce K.J."/>
            <person name="Klose J."/>
            <person name="Klosterman S.J."/>
            <person name="Deelstra H.J."/>
            <person name="Ortiz-Castellanos L."/>
            <person name="Li W."/>
            <person name="Sanchez-Alonso P."/>
            <person name="Schreier P.H."/>
            <person name="Haeuser-Hahn I."/>
            <person name="Vaupel M."/>
            <person name="Koopmann E."/>
            <person name="Friedrich G."/>
            <person name="Voss H."/>
            <person name="Schlueter T."/>
            <person name="Margolis J."/>
            <person name="Platt D."/>
            <person name="Swimmer C."/>
            <person name="Gnirke A."/>
            <person name="Chen F."/>
            <person name="Vysotskaia V."/>
            <person name="Mannhaupt G."/>
            <person name="Gueldener U."/>
            <person name="Muensterkoetter M."/>
            <person name="Haase D."/>
            <person name="Oesterheld M."/>
            <person name="Mewes H.-W."/>
            <person name="Mauceli E.W."/>
            <person name="DeCaprio D."/>
            <person name="Wade C.M."/>
            <person name="Butler J."/>
            <person name="Young S.K."/>
            <person name="Jaffe D.B."/>
            <person name="Calvo S.E."/>
            <person name="Nusbaum C."/>
            <person name="Galagan J.E."/>
            <person name="Birren B.W."/>
        </authorList>
    </citation>
    <scope>NUCLEOTIDE SEQUENCE [LARGE SCALE GENOMIC DNA]</scope>
    <source>
        <strain>DSM 14603 / FGSC 9021 / UM521</strain>
    </source>
</reference>
<reference key="2">
    <citation type="submission" date="2014-09" db="EMBL/GenBank/DDBJ databases">
        <authorList>
            <person name="Gueldener U."/>
            <person name="Muensterkoetter M."/>
            <person name="Walter M.C."/>
            <person name="Mannhaupt G."/>
            <person name="Kahmann R."/>
        </authorList>
    </citation>
    <scope>GENOME REANNOTATION</scope>
    <source>
        <strain>DSM 14603 / FGSC 9021 / UM521</strain>
    </source>
</reference>
<reference key="3">
    <citation type="journal article" date="2007" name="Mol. Microbiol.">
        <title>A biosynthetic gene cluster for a secreted cellobiose lipid with antifungal activity from Ustilago maydis.</title>
        <authorList>
            <person name="Teichmann B."/>
            <person name="Linne U."/>
            <person name="Hewald S."/>
            <person name="Marahiel M.A."/>
            <person name="Boelker M."/>
        </authorList>
    </citation>
    <scope>FUNCTION</scope>
    <scope>INDUCTION</scope>
</reference>
<reference key="4">
    <citation type="journal article" date="2010" name="Appl. Environ. Microbiol.">
        <title>Activation of the ustilagic acid biosynthesis gene cluster in Ustilago maydis by the C2H2 zinc finger transcription factor Rua1.</title>
        <authorList>
            <person name="Teichmann B."/>
            <person name="Liu L."/>
            <person name="Schink K.O."/>
            <person name="Boelker M."/>
        </authorList>
    </citation>
    <scope>FUNCTION</scope>
    <scope>DISRUPTION PHENOTYPE</scope>
    <scope>DOMAIN</scope>
    <scope>SUBCELLULAR LOCATION</scope>
    <scope>INDUCTION</scope>
    <scope>DNA-BINDING</scope>
    <scope>MUTAGENESIS OF CYS-748</scope>
</reference>
<proteinExistence type="evidence at protein level"/>
<sequence length="757" mass="82461">MMPISATIDSKSFPFDTTPTYASLDAYQMDQRALPTSPFNGAVKRDQMFDQLLLDPPSPTTSRFDGMWPTSNAQANASSSWTPSAGMPDAFDGVGNSLVNDASSDWSDFLMPLLATVATDFSSGSATKSEPSTCSSSTDFSMSSTADASTAPQHSSSGDSSMSSGLPVSTATCTAMPAAQNHQVTTQDASVQPKLEKQCQPPSHNVNQQNAFASSNQDNNCPQVHIIASWLDQDADRNTGHRQHNRHQKQQNLPQGQSCTNSGSSSRQVTRPNSPNHQRSRPQLRSRSSTGNGYTWPSVDPQVFLWAAFMMNGFQQAQAGTATASPMSDYSAMEYDDEPQAQHGYHATENCNVDDAMDGTGDFCKKEDRSQSADCGLLPRPPSNSPEPHPYPLDPMAAFARAAAESMAMSYSWPMPMPTNMMELQHNPARSNSTFGRVSQRHHQPPPSHRQRSRTSASSISNTNAAHRKHKVDAVRQSAVRSRRQSFVEPRQCASQSPSSPSESTAATDAKLTKPRAQSAGRSHVTERLPHLHTLSYSTPPDTSSSVSALTSTTTTTVSTGASSVASSISGPSSASSGIGNASGSLSFTITDKIVLKPRPGSGDEELAYPCATNSLLEMQNNEGPIVDAQQQAEEAVEKVQNLFPSDLYAPRFTRRGTCGREGWCSLCPQGEWYSMKRSQYLYHMQFDHGISNLTRRLFHPPQTLRVWNDAVSKTDGLCHHCNKWIPICFGPQRKRDFKAWFKHARKCHRDDTGCPI</sequence>
<dbReference type="EMBL" id="CM003162">
    <property type="protein sequence ID" value="KIS65754.1"/>
    <property type="molecule type" value="Genomic_DNA"/>
</dbReference>
<dbReference type="RefSeq" id="XP_011392726.1">
    <property type="nucleotide sequence ID" value="XM_011394424.1"/>
</dbReference>
<dbReference type="EnsemblFungi" id="KIS65754">
    <property type="protein sequence ID" value="KIS65754"/>
    <property type="gene ID" value="UMAG_06458"/>
</dbReference>
<dbReference type="GeneID" id="23566040"/>
<dbReference type="KEGG" id="uma:UMAG_06458"/>
<dbReference type="VEuPathDB" id="FungiDB:UMAG_06458"/>
<dbReference type="eggNOG" id="ENOG502TE7K">
    <property type="taxonomic scope" value="Eukaryota"/>
</dbReference>
<dbReference type="InParanoid" id="A0A0D1DMJ6"/>
<dbReference type="OrthoDB" id="2554992at2759"/>
<dbReference type="Proteomes" id="UP000000561">
    <property type="component" value="Chromosome 23"/>
</dbReference>
<dbReference type="GO" id="GO:0005634">
    <property type="term" value="C:nucleus"/>
    <property type="evidence" value="ECO:0007669"/>
    <property type="project" value="UniProtKB-SubCell"/>
</dbReference>
<dbReference type="GO" id="GO:0008270">
    <property type="term" value="F:zinc ion binding"/>
    <property type="evidence" value="ECO:0007669"/>
    <property type="project" value="UniProtKB-KW"/>
</dbReference>
<dbReference type="InterPro" id="IPR028012">
    <property type="entry name" value="Rua1_C"/>
</dbReference>
<dbReference type="PANTHER" id="PTHR28125">
    <property type="entry name" value="MEIOTIC EXPRESSION UP-REGULATED PROTEIN 26"/>
    <property type="match status" value="1"/>
</dbReference>
<dbReference type="PANTHER" id="PTHR28125:SF2">
    <property type="entry name" value="MEIOTIC EXPRESSION UP-REGULATED PROTEIN 26"/>
    <property type="match status" value="1"/>
</dbReference>
<dbReference type="Pfam" id="PF14616">
    <property type="entry name" value="Rua1_C"/>
    <property type="match status" value="1"/>
</dbReference>
<accession>A0A0D1DMJ6</accession>